<name>WHIB3_MYCTU</name>
<dbReference type="EMBL" id="AL123456">
    <property type="protein sequence ID" value="CCP46238.1"/>
    <property type="molecule type" value="Genomic_DNA"/>
</dbReference>
<dbReference type="PIR" id="E70737">
    <property type="entry name" value="E70737"/>
</dbReference>
<dbReference type="RefSeq" id="NP_217933.1">
    <property type="nucleotide sequence ID" value="NC_000962.3"/>
</dbReference>
<dbReference type="RefSeq" id="WP_003418017.1">
    <property type="nucleotide sequence ID" value="NZ_NVQJ01000027.1"/>
</dbReference>
<dbReference type="PDB" id="8CWR">
    <property type="method" value="X-ray"/>
    <property type="resolution" value="1.50 A"/>
    <property type="chains" value="A=1-90"/>
</dbReference>
<dbReference type="PDB" id="8CWT">
    <property type="method" value="X-ray"/>
    <property type="resolution" value="1.35 A"/>
    <property type="chains" value="A/C/E=1-90"/>
</dbReference>
<dbReference type="PDB" id="8CYF">
    <property type="method" value="X-ray"/>
    <property type="resolution" value="2.44 A"/>
    <property type="chains" value="A=1-102"/>
</dbReference>
<dbReference type="PDBsum" id="8CWR"/>
<dbReference type="PDBsum" id="8CWT"/>
<dbReference type="PDBsum" id="8CYF"/>
<dbReference type="SMR" id="P9WF41"/>
<dbReference type="IntAct" id="P9WF41">
    <property type="interactions" value="1"/>
</dbReference>
<dbReference type="STRING" id="83332.Rv3416"/>
<dbReference type="PaxDb" id="83332-Rv3416"/>
<dbReference type="GeneID" id="45427412"/>
<dbReference type="GeneID" id="887598"/>
<dbReference type="KEGG" id="mtu:Rv3416"/>
<dbReference type="KEGG" id="mtv:RVBD_3416"/>
<dbReference type="TubercuList" id="Rv3416"/>
<dbReference type="eggNOG" id="ENOG5032S23">
    <property type="taxonomic scope" value="Bacteria"/>
</dbReference>
<dbReference type="InParanoid" id="P9WF41"/>
<dbReference type="OrthoDB" id="4954884at2"/>
<dbReference type="PhylomeDB" id="P9WF41"/>
<dbReference type="PHI-base" id="PHI:5575"/>
<dbReference type="PHI-base" id="PHI:7218"/>
<dbReference type="Proteomes" id="UP000001584">
    <property type="component" value="Chromosome"/>
</dbReference>
<dbReference type="GO" id="GO:0005737">
    <property type="term" value="C:cytoplasm"/>
    <property type="evidence" value="ECO:0007669"/>
    <property type="project" value="UniProtKB-SubCell"/>
</dbReference>
<dbReference type="GO" id="GO:0009274">
    <property type="term" value="C:peptidoglycan-based cell wall"/>
    <property type="evidence" value="ECO:0007005"/>
    <property type="project" value="MTBBASE"/>
</dbReference>
<dbReference type="GO" id="GO:0051539">
    <property type="term" value="F:4 iron, 4 sulfur cluster binding"/>
    <property type="evidence" value="ECO:0000314"/>
    <property type="project" value="MTBBASE"/>
</dbReference>
<dbReference type="GO" id="GO:0035731">
    <property type="term" value="F:dinitrosyl-iron complex binding"/>
    <property type="evidence" value="ECO:0007669"/>
    <property type="project" value="UniProtKB-UniRule"/>
</dbReference>
<dbReference type="GO" id="GO:0003677">
    <property type="term" value="F:DNA binding"/>
    <property type="evidence" value="ECO:0000314"/>
    <property type="project" value="UniProtKB"/>
</dbReference>
<dbReference type="GO" id="GO:0051536">
    <property type="term" value="F:iron-sulfur cluster binding"/>
    <property type="evidence" value="ECO:0000314"/>
    <property type="project" value="MTBBASE"/>
</dbReference>
<dbReference type="GO" id="GO:0046872">
    <property type="term" value="F:metal ion binding"/>
    <property type="evidence" value="ECO:0007669"/>
    <property type="project" value="UniProtKB-KW"/>
</dbReference>
<dbReference type="GO" id="GO:0047134">
    <property type="term" value="F:protein-disulfide reductase [NAD(P)H] activity"/>
    <property type="evidence" value="ECO:0000318"/>
    <property type="project" value="GO_Central"/>
</dbReference>
<dbReference type="GO" id="GO:0015035">
    <property type="term" value="F:protein-disulfide reductase activity"/>
    <property type="evidence" value="ECO:0000314"/>
    <property type="project" value="MTBBASE"/>
</dbReference>
<dbReference type="GO" id="GO:0071766">
    <property type="term" value="P:Actinobacterium-type cell wall biogenesis"/>
    <property type="evidence" value="ECO:0000314"/>
    <property type="project" value="MTBBASE"/>
</dbReference>
<dbReference type="GO" id="GO:0045454">
    <property type="term" value="P:cell redox homeostasis"/>
    <property type="evidence" value="ECO:0000314"/>
    <property type="project" value="MTBBASE"/>
</dbReference>
<dbReference type="GO" id="GO:0045892">
    <property type="term" value="P:negative regulation of DNA-templated transcription"/>
    <property type="evidence" value="ECO:0000318"/>
    <property type="project" value="GO_Central"/>
</dbReference>
<dbReference type="GO" id="GO:0019216">
    <property type="term" value="P:regulation of lipid metabolic process"/>
    <property type="evidence" value="ECO:0000314"/>
    <property type="project" value="MTBBASE"/>
</dbReference>
<dbReference type="GO" id="GO:0075137">
    <property type="term" value="P:response to host redox environment"/>
    <property type="evidence" value="ECO:0000314"/>
    <property type="project" value="UniProtKB"/>
</dbReference>
<dbReference type="HAMAP" id="MF_01479">
    <property type="entry name" value="WhiB"/>
    <property type="match status" value="1"/>
</dbReference>
<dbReference type="InterPro" id="IPR034768">
    <property type="entry name" value="4FE4S_WBL"/>
</dbReference>
<dbReference type="InterPro" id="IPR003482">
    <property type="entry name" value="Whib"/>
</dbReference>
<dbReference type="PANTHER" id="PTHR38839:SF5">
    <property type="entry name" value="TRANSCRIPTIONAL REGULATOR WHID"/>
    <property type="match status" value="1"/>
</dbReference>
<dbReference type="PANTHER" id="PTHR38839">
    <property type="entry name" value="TRANSCRIPTIONAL REGULATOR WHID-RELATED"/>
    <property type="match status" value="1"/>
</dbReference>
<dbReference type="Pfam" id="PF02467">
    <property type="entry name" value="Whib"/>
    <property type="match status" value="1"/>
</dbReference>
<dbReference type="PROSITE" id="PS51674">
    <property type="entry name" value="4FE4S_WBL"/>
    <property type="match status" value="1"/>
</dbReference>
<protein>
    <recommendedName>
        <fullName>Redox- and pH-responsive transcriptional regulator WhiB3</fullName>
    </recommendedName>
</protein>
<gene>
    <name type="primary">whiB3</name>
    <name type="ordered locus">Rv3416</name>
</gene>
<organism>
    <name type="scientific">Mycobacterium tuberculosis (strain ATCC 25618 / H37Rv)</name>
    <dbReference type="NCBI Taxonomy" id="83332"/>
    <lineage>
        <taxon>Bacteria</taxon>
        <taxon>Bacillati</taxon>
        <taxon>Actinomycetota</taxon>
        <taxon>Actinomycetes</taxon>
        <taxon>Mycobacteriales</taxon>
        <taxon>Mycobacteriaceae</taxon>
        <taxon>Mycobacterium</taxon>
        <taxon>Mycobacterium tuberculosis complex</taxon>
    </lineage>
</organism>
<keyword id="KW-0002">3D-structure</keyword>
<keyword id="KW-0004">4Fe-4S</keyword>
<keyword id="KW-0963">Cytoplasm</keyword>
<keyword id="KW-1015">Disulfide bond</keyword>
<keyword id="KW-0238">DNA-binding</keyword>
<keyword id="KW-0408">Iron</keyword>
<keyword id="KW-0411">Iron-sulfur</keyword>
<keyword id="KW-0479">Metal-binding</keyword>
<keyword id="KW-1185">Reference proteome</keyword>
<keyword id="KW-0346">Stress response</keyword>
<keyword id="KW-0804">Transcription</keyword>
<keyword id="KW-0805">Transcription regulation</keyword>
<keyword id="KW-0843">Virulence</keyword>
<comment type="function">
    <text evidence="2 4 5 6 7 8 9">A redox-sensitive transcriptional regulator. Maintains intracellular redox homeostasis by regulating catabolic metabolism and polyketide biosynthesis (PubMed:17609386, PubMed:19680450). Regulates expression of the redox buffer ergothioneine (ERG) in a carbon-source-dependent manner; loss of ERG or mycothiol (MSH, the other major redox buffer in this bacteria) leads to respiratory alterations and bioenergetic deficiencies that negatively impact virulence (PubMed:26774486). In response to low external pH (like that found in host macrophage phagosomes) alters endogenous gene expression leading to acid resistance; MSH and WhiB3 are probably part of a regulatory circuit that mediates gene expression upon acid stress (PubMed:26637353). Regulates pathogenic lipid synthesis, coordinating proprionate flux (and other host-derived fatty acid oxidation intermediates) into methyl-branched fatty acids (polyacyltrehalose, phthiocerol dimycocerosates, sulfolipids) and the storage lipid triacylglycerol, functioning as reductive sink (PubMed:19680450). During intracellular growth M.tuberculosis uses host fatty acids as an energy source, generating large quantities of proprionate and NADH/NADPH, which are toxic and highly reducing respectively. WhiB3 is thought to help dissipate proprionate and NADH/NADPH by switching to the in vivo carbon source and via lipid anabolism (PubMed:19680450). Responds to NO and O(2) (PubMed:17609386). Regulates expression of genes encoding modular polyketide synthases such as pks2, pks3 and fbpA (PubMed:19680450). The oxidized apo-form of WhiB3 binds DNA (with 2 intramolecular disulfide bonds); holo-WhiB3 (with the 4Fe-4S cluster) binds DNA considerably less well (PubMed:19680450). Discriminates poorly between specific and non-specific DNA-binding. Plays a role in virulence and nutritional stress (PubMed:11880648, PubMed:17609386, PubMed:26637353). In its apo-form can act as a protein disulfide reductase (PubMed:18550384).</text>
</comment>
<comment type="function">
    <text evidence="8">May respond to mycothiol (MSH) redox potential (E-MSH) which decreases at pH 4.5 for up to 72 hours, indicative of cellular reductive stress; deletion of whiB3 leads to a lesser E-MSH at 72 hours, indicative of cellular oxidative stress (PubMed:26637353). Probably via its effects on production of polyketide lipids, regulates host gene expression, leading to blockage of phagosome maturation (PubMed:26637353). Equilibration of extra- and intracytoplasmic pH kills bacteria (PubMed:26637353).</text>
</comment>
<comment type="cofactor">
    <cofactor evidence="4 5 6">
        <name>[4Fe-4S] cluster</name>
        <dbReference type="ChEBI" id="CHEBI:49883"/>
    </cofactor>
    <text evidence="4 5 6">Binds 1 [4Fe-4S] cluster per subunit (PubMed:17609386). Following nitrosylation of the [4Fe-4S] cluster binds 1 [4Fe-8(NO)] cluster per subunit (PubMed:17609386).</text>
</comment>
<comment type="subunit">
    <text evidence="2 12">Homodimer (Probable) (PubMed:18550384). Interacts with the C-terminal 54 residues of sigma factor SigA (RpoV) (PubMed:11880648).</text>
</comment>
<comment type="interaction">
    <interactant intactId="EBI-11859434">
        <id>P9WF41</id>
    </interactant>
    <interactant intactId="EBI-11859464">
        <id>P9WGI1</id>
        <label>sigA</label>
    </interactant>
    <organismsDiffer>false</organismsDiffer>
    <experiments>3</experiments>
</comment>
<comment type="subcellular location">
    <subcellularLocation>
        <location evidence="1">Cytoplasm</location>
    </subcellularLocation>
</comment>
<comment type="induction">
    <text evidence="3 8">100-fold induced in wild-type C57BL/6 mice 2 weeks after lung infection, RNA levels drop to 30X induced 8 weeks post-infection (PubMed:16923787). Similar but less dramatic induction is seen in immunocompromised mice (PubMed:16923787). Rapidly induced in resting mouse macrophages, remains up-regulated for at least 60 hours, continuing induction is repressed by interferon gamma (PubMed:16923787). Induced by growth at acidic pH (PubMed:26637353).</text>
</comment>
<comment type="PTM">
    <text evidence="4">The 4Fe-4S cluster interacts with NO, forming a protein-bound dinitrosyliron dithiol complex (PubMed:17609386).</text>
</comment>
<comment type="PTM">
    <text evidence="4 5">The 4Fe-4S cluster interacts with O(2), leading to its degradation. Cluster loss takes about 2 hours (PubMed:17609386). Once in the apo-form the cysteines oxidize to form 2 intramolecular disulfide bonds (PubMed:18550384).</text>
</comment>
<comment type="mass spectrometry" mass="14636.76" method="MALDI" evidence="7">
    <text>Fully reduced protein.</text>
</comment>
<comment type="mass spectrometry" mass="14407.22" method="MALDI" evidence="7">
    <text>Fully oxidized protein.</text>
</comment>
<comment type="disruption phenotype">
    <text evidence="2 4 7 8 9">Not essential for growth in culture, or growth in vivo in mouse and guinea pig infections (PubMed:11880648). Disruption significantly enhances survival of immunocompetent mice (PubMed:11880648). Decreased bacterial growth in guinea pig lungs, but not spleen (PubMed:26637353). Growth on minimal media, glucose or succinate is poor, suggesting WhiB3 is involved in starvation response (PubMed:17609386). Growth on acetate is better than wild-type (PubMed:17609386). 55-fold decreased survival at pH 4.5, no difference at pH 5.5 or 6.6 (PubMed:26637353). Altered expression of genes involved in cell wall lipid composition, the ESX-1 secretion system and redox balance, impairs the mycothiol-specific reductive response to acid stress (PubMed:26637353). Dysfunctional respiration when grown in pyruvate, increased intracellular ergothioneine (ERG) production when grown in a number of carbon sources (PubMed:26774486). Upon infection of human THP-1 macrophage-like cells bacteria are localized to acidified lysosomes (M.tuberculosis usually blocks lysosome acidification), do not reduce mycothiol (MSH) and have significantly decreased survival (PubMed:26637353). Leads to up-regulation of host innate immunity genes usually repressed by M.tuberculosis (such as phagosome maturation and TLR signaling) and down-regulation of genes that inhibit autophagy (such as mTOR) (PubMed:26637353). Cell size, shape and surface architecture are perturbed, as is synthesis of cell surface associated virulence lipids both in culture and in cultured macrophages, or in response to oxidizing or reducing agents (PubMed:19680450). Disrupted strains are more resistant to toxic levels of propionate (PubMed:19680450).</text>
</comment>
<comment type="similarity">
    <text evidence="10">Belongs to the WhiB family.</text>
</comment>
<sequence length="102" mass="11612">MPQPEQLPGPNADIWNWQLQGLCRGMDSSMFFHPDGERGRARTQREQRAKEMCRRCPVIEACRSHALEVGEPYGVWGGLSESERDLLLKGTMGRTRGIRRTA</sequence>
<reference key="1">
    <citation type="journal article" date="1998" name="Nature">
        <title>Deciphering the biology of Mycobacterium tuberculosis from the complete genome sequence.</title>
        <authorList>
            <person name="Cole S.T."/>
            <person name="Brosch R."/>
            <person name="Parkhill J."/>
            <person name="Garnier T."/>
            <person name="Churcher C.M."/>
            <person name="Harris D.E."/>
            <person name="Gordon S.V."/>
            <person name="Eiglmeier K."/>
            <person name="Gas S."/>
            <person name="Barry C.E. III"/>
            <person name="Tekaia F."/>
            <person name="Badcock K."/>
            <person name="Basham D."/>
            <person name="Brown D."/>
            <person name="Chillingworth T."/>
            <person name="Connor R."/>
            <person name="Davies R.M."/>
            <person name="Devlin K."/>
            <person name="Feltwell T."/>
            <person name="Gentles S."/>
            <person name="Hamlin N."/>
            <person name="Holroyd S."/>
            <person name="Hornsby T."/>
            <person name="Jagels K."/>
            <person name="Krogh A."/>
            <person name="McLean J."/>
            <person name="Moule S."/>
            <person name="Murphy L.D."/>
            <person name="Oliver S."/>
            <person name="Osborne J."/>
            <person name="Quail M.A."/>
            <person name="Rajandream M.A."/>
            <person name="Rogers J."/>
            <person name="Rutter S."/>
            <person name="Seeger K."/>
            <person name="Skelton S."/>
            <person name="Squares S."/>
            <person name="Squares R."/>
            <person name="Sulston J.E."/>
            <person name="Taylor K."/>
            <person name="Whitehead S."/>
            <person name="Barrell B.G."/>
        </authorList>
    </citation>
    <scope>NUCLEOTIDE SEQUENCE [LARGE SCALE GENOMIC DNA]</scope>
    <source>
        <strain>ATCC 25618 / H37Rv</strain>
    </source>
</reference>
<reference key="2">
    <citation type="journal article" date="2002" name="Proc. Natl. Acad. Sci. U.S.A.">
        <title>Mycobacterium tuberculosis WhiB3 interacts with RpoV to affect host survival but is dispensable for in vivo growth.</title>
        <authorList>
            <person name="Steyn A.J."/>
            <person name="Collins D.M."/>
            <person name="Hondalus M.K."/>
            <person name="Jacobs W.R. Jr."/>
            <person name="Kawakami R.P."/>
            <person name="Bloom B.R."/>
        </authorList>
    </citation>
    <scope>FUNCTION</scope>
    <scope>INTERACTION WITH SIGA</scope>
    <scope>DISRUPTION PHENOTYPE</scope>
    <source>
        <strain>ATCC 25618 / H37Rv</strain>
    </source>
</reference>
<reference key="3">
    <citation type="journal article" date="2006" name="Infect. Immun.">
        <title>Regulation of Mycobacterium tuberculosis whiB3 in the mouse lung and macrophages.</title>
        <authorList>
            <person name="Banaiee N."/>
            <person name="Jacobs W.R. Jr."/>
            <person name="Ernst J.D."/>
        </authorList>
    </citation>
    <scope>INDUCTION IN MOUSE INFECTION</scope>
</reference>
<reference key="4">
    <citation type="journal article" date="2007" name="Proc. Natl. Acad. Sci. U.S.A.">
        <title>Mycobacterium tuberculosis WhiB3 responds to O2 and nitric oxide via its [4Fe-4S] cluster and is essential for nutrient starvation survival.</title>
        <authorList>
            <person name="Singh A."/>
            <person name="Guidry L."/>
            <person name="Narasimhulu K.V."/>
            <person name="Mai D."/>
            <person name="Trombley J."/>
            <person name="Redding K.E."/>
            <person name="Giles G.I."/>
            <person name="Lancaster J.R. Jr."/>
            <person name="Steyn A.J."/>
        </authorList>
    </citation>
    <scope>FUNCTION AS A REDOX SENSOR</scope>
    <scope>COFACTOR</scope>
    <scope>DINITROSYLATION</scope>
    <scope>DISRUPTION PHENOTYPE</scope>
    <scope>MUTAGENESIS OF CYS-23; CYS-53; CYS-56 AND CYS-62</scope>
    <source>
        <strain>ATCC 25618 / H37Rv</strain>
    </source>
</reference>
<reference key="5">
    <citation type="journal article" date="2008" name="Protein Expr. Purif.">
        <title>Matrix-assisted refolding and redox properties of WhiB3/Rv3416 of Mycobacterium tuberculosis H37Rv.</title>
        <authorList>
            <person name="Suhail Alam M."/>
            <person name="Agrawal P."/>
        </authorList>
    </citation>
    <scope>FUNCTION AS A DISULFIDE ISOMERASE</scope>
    <scope>COFACTOR</scope>
    <scope>SUBUNIT</scope>
    <scope>DISULFIDE BOND</scope>
    <source>
        <strain>ATCC 25618 / H37Rv</strain>
    </source>
</reference>
<reference key="6">
    <citation type="journal article" date="2009" name="PLoS Pathog.">
        <title>Mycobacterium tuberculosis WhiB3 maintains redox homeostasis by regulating virulence lipid anabolism to modulate macrophage response.</title>
        <authorList>
            <person name="Singh A."/>
            <person name="Crossman D.K."/>
            <person name="Mai D."/>
            <person name="Guidry L."/>
            <person name="Voskuil M.I."/>
            <person name="Renfrow M.B."/>
            <person name="Steyn A.J."/>
        </authorList>
    </citation>
    <scope>FUNCTION</scope>
    <scope>DNA-BINDING</scope>
    <scope>DISULFIDE BONDS</scope>
    <scope>MASS SPECTROMETRY</scope>
    <scope>DISRUPTION PHENOTYPE</scope>
    <source>
        <strain>ATCC 25618 / H37Rv</strain>
    </source>
</reference>
<reference key="7">
    <citation type="journal article" date="2009" name="FEBS J.">
        <title>Studies on structural and functional divergence among seven WhiB proteins of Mycobacterium tuberculosis H37Rv.</title>
        <authorList>
            <person name="Alam M.S."/>
            <person name="Garg S.K."/>
            <person name="Agrawal P."/>
        </authorList>
    </citation>
    <scope>FUNCTION</scope>
    <scope>COFACTOR</scope>
    <scope>DISULFIDE BOND</scope>
    <source>
        <strain>ATCC 25618 / H37Rv</strain>
    </source>
</reference>
<reference key="8">
    <citation type="journal article" date="2016" name="Cell Rep.">
        <title>Ergothioneine maintains redox and bioenergetic homeostasis essential for drug susceptibility and virulence of Mycobacterium tuberculosis.</title>
        <authorList>
            <person name="Saini V."/>
            <person name="Cumming B.M."/>
            <person name="Guidry L."/>
            <person name="Lamprecht D.A."/>
            <person name="Adamson J.H."/>
            <person name="Reddy V.P."/>
            <person name="Chinta K.C."/>
            <person name="Mazorodze J.H."/>
            <person name="Glasgow J.N."/>
            <person name="Richard-Greenblatt M."/>
            <person name="Gomez-Velasco A."/>
            <person name="Bach H."/>
            <person name="Av-Gay Y."/>
            <person name="Eoh H."/>
            <person name="Rhee K."/>
            <person name="Steyn A.J."/>
        </authorList>
    </citation>
    <scope>FUNCTION</scope>
    <scope>DISRUPTION PHENOTYPE</scope>
    <source>
        <strain>H37Rv</strain>
    </source>
</reference>
<reference key="9">
    <citation type="journal article" date="2016" name="J. Biol. Chem.">
        <title>Mycobacterium tuberculosis WhiB3 responds to vacuolar pH-induced changes in mycothiol redox potential to modulate phagosomal maturation and virulence.</title>
        <authorList>
            <person name="Mehta M."/>
            <person name="Rajmani R.S."/>
            <person name="Singh A."/>
        </authorList>
    </citation>
    <scope>FUNCTION</scope>
    <scope>REGULON</scope>
    <scope>INDUCTION BY ACID STRESS</scope>
    <scope>DISRUPTION PHENOTYPE</scope>
    <source>
        <strain>H37Rv</strain>
    </source>
</reference>
<reference key="10">
    <citation type="journal article" date="2012" name="Antioxid. Redox Signal.">
        <title>Mycobacterium tuberculosis WhiB3: a novel iron-sulfur cluster protein that regulates redox homeostasis and virulence.</title>
        <authorList>
            <person name="Saini V."/>
            <person name="Farhana A."/>
            <person name="Steyn A.J."/>
        </authorList>
    </citation>
    <scope>REVIEW</scope>
</reference>
<accession>P9WF41</accession>
<accession>F2GEG1</accession>
<accession>L0TCG8</accession>
<accession>Q50710</accession>
<accession>Q7D5K3</accession>
<evidence type="ECO:0000250" key="1">
    <source>
        <dbReference type="UniProtKB" id="Q9S426"/>
    </source>
</evidence>
<evidence type="ECO:0000269" key="2">
    <source>
    </source>
</evidence>
<evidence type="ECO:0000269" key="3">
    <source>
    </source>
</evidence>
<evidence type="ECO:0000269" key="4">
    <source>
    </source>
</evidence>
<evidence type="ECO:0000269" key="5">
    <source>
    </source>
</evidence>
<evidence type="ECO:0000269" key="6">
    <source>
    </source>
</evidence>
<evidence type="ECO:0000269" key="7">
    <source>
    </source>
</evidence>
<evidence type="ECO:0000269" key="8">
    <source>
    </source>
</evidence>
<evidence type="ECO:0000269" key="9">
    <source>
    </source>
</evidence>
<evidence type="ECO:0000305" key="10"/>
<evidence type="ECO:0000305" key="11">
    <source>
    </source>
</evidence>
<evidence type="ECO:0000305" key="12">
    <source>
    </source>
</evidence>
<evidence type="ECO:0007829" key="13">
    <source>
        <dbReference type="PDB" id="8CWR"/>
    </source>
</evidence>
<evidence type="ECO:0007829" key="14">
    <source>
        <dbReference type="PDB" id="8CWT"/>
    </source>
</evidence>
<feature type="chain" id="PRO_0000420382" description="Redox- and pH-responsive transcriptional regulator WhiB3">
    <location>
        <begin position="1"/>
        <end position="102"/>
    </location>
</feature>
<feature type="domain" description="4Fe-4S Wbl-type">
    <location>
        <begin position="22"/>
        <end position="86"/>
    </location>
</feature>
<feature type="binding site" evidence="11">
    <location>
        <position position="23"/>
    </location>
    <ligand>
        <name>[4Fe-4S] cluster</name>
        <dbReference type="ChEBI" id="CHEBI:49883"/>
    </ligand>
</feature>
<feature type="binding site" evidence="11">
    <location>
        <position position="53"/>
    </location>
    <ligand>
        <name>[4Fe-4S] cluster</name>
        <dbReference type="ChEBI" id="CHEBI:49883"/>
    </ligand>
</feature>
<feature type="binding site" evidence="11">
    <location>
        <position position="56"/>
    </location>
    <ligand>
        <name>[4Fe-4S] cluster</name>
        <dbReference type="ChEBI" id="CHEBI:49883"/>
    </ligand>
</feature>
<feature type="binding site" evidence="11">
    <location>
        <position position="62"/>
    </location>
    <ligand>
        <name>[4Fe-4S] cluster</name>
        <dbReference type="ChEBI" id="CHEBI:49883"/>
    </ligand>
</feature>
<feature type="mutagenesis site" description="No 4Fe-4S cluster assembly, does not complement growth defects; when associated with A-53; A-56 and A-62." evidence="4">
    <original>C</original>
    <variation>A</variation>
    <location>
        <position position="23"/>
    </location>
</feature>
<feature type="mutagenesis site" description="No 4Fe-4S cluster assembly, does not complement growth defects; when associated with A-23; A-56 and A-62." evidence="4">
    <original>C</original>
    <variation>A</variation>
    <location>
        <position position="53"/>
    </location>
</feature>
<feature type="mutagenesis site" description="No 4Fe-4S cluster assembly, does not complement growth defects; when associated with A-33; A-53 and A-62." evidence="4">
    <original>C</original>
    <variation>A</variation>
    <location>
        <position position="56"/>
    </location>
</feature>
<feature type="mutagenesis site" description="No 4Fe-4S cluster assembly, does not complement growth defects; when associated with A-33; A-53 and A-56." evidence="4">
    <original>C</original>
    <variation>A</variation>
    <location>
        <position position="62"/>
    </location>
</feature>
<feature type="turn" evidence="13">
    <location>
        <begin position="10"/>
        <end position="14"/>
    </location>
</feature>
<feature type="helix" evidence="14">
    <location>
        <begin position="16"/>
        <end position="20"/>
    </location>
</feature>
<feature type="turn" evidence="14">
    <location>
        <begin position="22"/>
        <end position="25"/>
    </location>
</feature>
<feature type="helix" evidence="14">
    <location>
        <begin position="28"/>
        <end position="30"/>
    </location>
</feature>
<feature type="helix" evidence="14">
    <location>
        <begin position="39"/>
        <end position="53"/>
    </location>
</feature>
<feature type="helix" evidence="14">
    <location>
        <begin position="59"/>
        <end position="69"/>
    </location>
</feature>
<feature type="helix" evidence="14">
    <location>
        <begin position="81"/>
        <end position="88"/>
    </location>
</feature>
<proteinExistence type="evidence at protein level"/>